<comment type="function">
    <text evidence="1">Has 3'-5' poly(A) exoribonuclease activity for synthetic poly(A) RNA substrate. Catalytic component of the CCR4-NOT complex which is one of the major cellular mRNA deadenylases and is linked to various cellular processes including bulk mRNA degradation, miRNA-mediated repression, translational repression during translational initiation and general transcription regulation. During miRNA-mediated repression the complex also seems to act as translational repressor during translational initiation. Additional complex functions may be a consequence of its influence on mRNA expression (By similarity).</text>
</comment>
<comment type="catalytic activity">
    <reaction>
        <text>Exonucleolytic cleavage of poly(A) to 5'-AMP.</text>
        <dbReference type="EC" id="3.1.13.4"/>
    </reaction>
</comment>
<comment type="cofactor">
    <cofactor evidence="2">
        <name>Mn(2+)</name>
        <dbReference type="ChEBI" id="CHEBI:29035"/>
    </cofactor>
    <cofactor evidence="2">
        <name>Mg(2+)</name>
        <dbReference type="ChEBI" id="CHEBI:18420"/>
    </cofactor>
    <cofactor evidence="2">
        <name>Co(2+)</name>
        <dbReference type="ChEBI" id="CHEBI:48828"/>
    </cofactor>
    <text evidence="2">Binds 2 divalent metal cations per subunit with RNAase activity being higher in presence of Mn(2+) than of Mg(2+) or Co(2+).</text>
</comment>
<comment type="subunit">
    <text evidence="1">Component of the CCR4-NOT complex.</text>
</comment>
<comment type="subcellular location">
    <subcellularLocation>
        <location evidence="1">Nucleus</location>
    </subcellularLocation>
    <subcellularLocation>
        <location evidence="1">Cytoplasm</location>
    </subcellularLocation>
</comment>
<comment type="similarity">
    <text evidence="3">Belongs to the CAF1 family.</text>
</comment>
<reference key="1">
    <citation type="journal article" date="2005" name="Genome Biol.">
        <title>Full-length cDNAs from chicken bursal lymphocytes to facilitate gene function analysis.</title>
        <authorList>
            <person name="Caldwell R.B."/>
            <person name="Kierzek A.M."/>
            <person name="Arakawa H."/>
            <person name="Bezzubov Y."/>
            <person name="Zaim J."/>
            <person name="Fiedler P."/>
            <person name="Kutter S."/>
            <person name="Blagodatski A."/>
            <person name="Kostovska D."/>
            <person name="Koter M."/>
            <person name="Plachy J."/>
            <person name="Carninci P."/>
            <person name="Hayashizaki Y."/>
            <person name="Buerstedde J.-M."/>
        </authorList>
    </citation>
    <scope>NUCLEOTIDE SEQUENCE [LARGE SCALE MRNA]</scope>
    <source>
        <strain>CB</strain>
        <tissue>Bursa of Fabricius</tissue>
    </source>
</reference>
<evidence type="ECO:0000250" key="1"/>
<evidence type="ECO:0000250" key="2">
    <source>
        <dbReference type="UniProtKB" id="Q9UIV1"/>
    </source>
</evidence>
<evidence type="ECO:0000305" key="3"/>
<gene>
    <name type="primary">CNOT7</name>
    <name type="synonym">CAF1</name>
    <name type="ORF">RCJMB04_15f9</name>
</gene>
<protein>
    <recommendedName>
        <fullName>CCR4-NOT transcription complex subunit 7</fullName>
        <ecNumber>3.1.13.4</ecNumber>
    </recommendedName>
    <alternativeName>
        <fullName>CCR4-associated factor 1</fullName>
        <shortName>CAF-1</shortName>
    </alternativeName>
</protein>
<proteinExistence type="evidence at transcript level"/>
<organism>
    <name type="scientific">Gallus gallus</name>
    <name type="common">Chicken</name>
    <dbReference type="NCBI Taxonomy" id="9031"/>
    <lineage>
        <taxon>Eukaryota</taxon>
        <taxon>Metazoa</taxon>
        <taxon>Chordata</taxon>
        <taxon>Craniata</taxon>
        <taxon>Vertebrata</taxon>
        <taxon>Euteleostomi</taxon>
        <taxon>Archelosauria</taxon>
        <taxon>Archosauria</taxon>
        <taxon>Dinosauria</taxon>
        <taxon>Saurischia</taxon>
        <taxon>Theropoda</taxon>
        <taxon>Coelurosauria</taxon>
        <taxon>Aves</taxon>
        <taxon>Neognathae</taxon>
        <taxon>Galloanserae</taxon>
        <taxon>Galliformes</taxon>
        <taxon>Phasianidae</taxon>
        <taxon>Phasianinae</taxon>
        <taxon>Gallus</taxon>
    </lineage>
</organism>
<sequence length="285" mass="32745">MPAATVDHSQRICEVWACNLDEEMKKIRQVIRKYNYVAMDTEFPGVVARPIGEFRSNADYQYQLLRCNVDLLKIIQLGLTFMNEQGEYPPGTSTWQFNFKFNLTEDMYAQDSIELLTTSGIQFKKHEEEGIETQYFAELLMTSGVVLCEGVKWLSFHSGYDFGYLIKILTNSNLPEEELDFFEILRLFFPVIYDVKYLMKSCKNLKGGLQEVAEQLELERIGPQHQAGSDSLLTGMAFFKMREMFFEDHIDDAKYCGHLYGLGSGSSYVQNGTGNAYEEEANKQS</sequence>
<keyword id="KW-0963">Cytoplasm</keyword>
<keyword id="KW-0269">Exonuclease</keyword>
<keyword id="KW-0378">Hydrolase</keyword>
<keyword id="KW-0460">Magnesium</keyword>
<keyword id="KW-0479">Metal-binding</keyword>
<keyword id="KW-0540">Nuclease</keyword>
<keyword id="KW-0539">Nucleus</keyword>
<keyword id="KW-1185">Reference proteome</keyword>
<keyword id="KW-0678">Repressor</keyword>
<keyword id="KW-0694">RNA-binding</keyword>
<keyword id="KW-0943">RNA-mediated gene silencing</keyword>
<keyword id="KW-0804">Transcription</keyword>
<keyword id="KW-0805">Transcription regulation</keyword>
<keyword id="KW-0810">Translation regulation</keyword>
<name>CNOT7_CHICK</name>
<feature type="chain" id="PRO_0000313894" description="CCR4-NOT transcription complex subunit 7">
    <location>
        <begin position="1"/>
        <end position="285"/>
    </location>
</feature>
<feature type="binding site" evidence="1">
    <location>
        <position position="40"/>
    </location>
    <ligand>
        <name>a divalent metal cation</name>
        <dbReference type="ChEBI" id="CHEBI:60240"/>
        <label>1</label>
        <note>catalytic</note>
    </ligand>
</feature>
<feature type="binding site" evidence="1">
    <location>
        <position position="40"/>
    </location>
    <ligand>
        <name>a divalent metal cation</name>
        <dbReference type="ChEBI" id="CHEBI:60240"/>
        <label>2</label>
        <note>catalytic</note>
    </ligand>
</feature>
<feature type="binding site" evidence="1">
    <location>
        <position position="42"/>
    </location>
    <ligand>
        <name>a divalent metal cation</name>
        <dbReference type="ChEBI" id="CHEBI:60240"/>
        <label>2</label>
        <note>catalytic</note>
    </ligand>
</feature>
<feature type="binding site" evidence="1">
    <location>
        <position position="161"/>
    </location>
    <ligand>
        <name>a divalent metal cation</name>
        <dbReference type="ChEBI" id="CHEBI:60240"/>
        <label>1</label>
        <note>catalytic</note>
    </ligand>
</feature>
<feature type="binding site" evidence="1">
    <location>
        <position position="230"/>
    </location>
    <ligand>
        <name>a divalent metal cation</name>
        <dbReference type="ChEBI" id="CHEBI:60240"/>
        <label>2</label>
        <note>catalytic</note>
    </ligand>
</feature>
<feature type="binding site" evidence="1">
    <location>
        <position position="278"/>
    </location>
    <ligand>
        <name>a divalent metal cation</name>
        <dbReference type="ChEBI" id="CHEBI:60240"/>
        <label>1</label>
        <note>catalytic</note>
    </ligand>
</feature>
<accession>Q5ZJV9</accession>
<dbReference type="EC" id="3.1.13.4"/>
<dbReference type="EMBL" id="AJ720325">
    <property type="protein sequence ID" value="CAG31984.1"/>
    <property type="molecule type" value="mRNA"/>
</dbReference>
<dbReference type="RefSeq" id="NP_001006454.1">
    <property type="nucleotide sequence ID" value="NM_001006454.2"/>
</dbReference>
<dbReference type="RefSeq" id="XP_015140922.1">
    <property type="nucleotide sequence ID" value="XM_015285436.4"/>
</dbReference>
<dbReference type="RefSeq" id="XP_025005460.1">
    <property type="nucleotide sequence ID" value="XM_025149692.3"/>
</dbReference>
<dbReference type="RefSeq" id="XP_046772190.1">
    <property type="nucleotide sequence ID" value="XM_046916234.1"/>
</dbReference>
<dbReference type="RefSeq" id="XP_046772191.1">
    <property type="nucleotide sequence ID" value="XM_046916235.1"/>
</dbReference>
<dbReference type="SMR" id="Q5ZJV9"/>
<dbReference type="FunCoup" id="Q5ZJV9">
    <property type="interactions" value="3711"/>
</dbReference>
<dbReference type="STRING" id="9031.ENSGALP00000022159"/>
<dbReference type="PaxDb" id="9031-ENSGALP00000022159"/>
<dbReference type="Ensembl" id="ENSGALT00010038521.1">
    <property type="protein sequence ID" value="ENSGALP00010022291.1"/>
    <property type="gene ID" value="ENSGALG00010015983.1"/>
</dbReference>
<dbReference type="GeneID" id="422733"/>
<dbReference type="KEGG" id="gga:422733"/>
<dbReference type="CTD" id="29883"/>
<dbReference type="VEuPathDB" id="HostDB:geneid_422733"/>
<dbReference type="eggNOG" id="KOG0304">
    <property type="taxonomic scope" value="Eukaryota"/>
</dbReference>
<dbReference type="GeneTree" id="ENSGT00390000000080"/>
<dbReference type="HOGENOM" id="CLU_027974_0_1_1"/>
<dbReference type="InParanoid" id="Q5ZJV9"/>
<dbReference type="OrthoDB" id="1164111at2759"/>
<dbReference type="PhylomeDB" id="Q5ZJV9"/>
<dbReference type="TreeFam" id="TF314185"/>
<dbReference type="Reactome" id="R-GGA-429947">
    <property type="pathway name" value="Deadenylation of mRNA"/>
</dbReference>
<dbReference type="Reactome" id="R-GGA-6804115">
    <property type="pathway name" value="TP53 regulates transcription of additional cell cycle genes whose exact role in the p53 pathway remain uncertain"/>
</dbReference>
<dbReference type="PRO" id="PR:Q5ZJV9"/>
<dbReference type="Proteomes" id="UP000000539">
    <property type="component" value="Chromosome 4"/>
</dbReference>
<dbReference type="Bgee" id="ENSGALG00000013649">
    <property type="expression patterns" value="Expressed in colon and 13 other cell types or tissues"/>
</dbReference>
<dbReference type="GO" id="GO:0030014">
    <property type="term" value="C:CCR4-NOT complex"/>
    <property type="evidence" value="ECO:0000250"/>
    <property type="project" value="UniProtKB"/>
</dbReference>
<dbReference type="GO" id="GO:0030015">
    <property type="term" value="C:CCR4-NOT core complex"/>
    <property type="evidence" value="ECO:0000318"/>
    <property type="project" value="GO_Central"/>
</dbReference>
<dbReference type="GO" id="GO:0016607">
    <property type="term" value="C:nuclear speck"/>
    <property type="evidence" value="ECO:0007669"/>
    <property type="project" value="Ensembl"/>
</dbReference>
<dbReference type="GO" id="GO:0000932">
    <property type="term" value="C:P-body"/>
    <property type="evidence" value="ECO:0000318"/>
    <property type="project" value="GO_Central"/>
</dbReference>
<dbReference type="GO" id="GO:0000175">
    <property type="term" value="F:3'-5'-RNA exonuclease activity"/>
    <property type="evidence" value="ECO:0000250"/>
    <property type="project" value="UniProtKB"/>
</dbReference>
<dbReference type="GO" id="GO:0140297">
    <property type="term" value="F:DNA-binding transcription factor binding"/>
    <property type="evidence" value="ECO:0007669"/>
    <property type="project" value="Ensembl"/>
</dbReference>
<dbReference type="GO" id="GO:0046872">
    <property type="term" value="F:metal ion binding"/>
    <property type="evidence" value="ECO:0007669"/>
    <property type="project" value="UniProtKB-KW"/>
</dbReference>
<dbReference type="GO" id="GO:0034584">
    <property type="term" value="F:piRNA binding"/>
    <property type="evidence" value="ECO:0007669"/>
    <property type="project" value="Ensembl"/>
</dbReference>
<dbReference type="GO" id="GO:0004535">
    <property type="term" value="F:poly(A)-specific ribonuclease activity"/>
    <property type="evidence" value="ECO:0000250"/>
    <property type="project" value="UniProtKB"/>
</dbReference>
<dbReference type="GO" id="GO:0004532">
    <property type="term" value="F:RNA exonuclease activity"/>
    <property type="evidence" value="ECO:0000250"/>
    <property type="project" value="UniProtKB"/>
</dbReference>
<dbReference type="GO" id="GO:0003714">
    <property type="term" value="F:transcription corepressor activity"/>
    <property type="evidence" value="ECO:0007669"/>
    <property type="project" value="Ensembl"/>
</dbReference>
<dbReference type="GO" id="GO:0000290">
    <property type="term" value="P:deadenylation-dependent decapping of nuclear-transcribed mRNA"/>
    <property type="evidence" value="ECO:0007669"/>
    <property type="project" value="Ensembl"/>
</dbReference>
<dbReference type="GO" id="GO:0051607">
    <property type="term" value="P:defense response to virus"/>
    <property type="evidence" value="ECO:0007669"/>
    <property type="project" value="Ensembl"/>
</dbReference>
<dbReference type="GO" id="GO:0035279">
    <property type="term" value="P:miRNA-mediated gene silencing by mRNA destabilization"/>
    <property type="evidence" value="ECO:0000250"/>
    <property type="project" value="UniProtKB"/>
</dbReference>
<dbReference type="GO" id="GO:0008285">
    <property type="term" value="P:negative regulation of cell population proliferation"/>
    <property type="evidence" value="ECO:0000250"/>
    <property type="project" value="UniProtKB"/>
</dbReference>
<dbReference type="GO" id="GO:0060339">
    <property type="term" value="P:negative regulation of type I interferon-mediated signaling pathway"/>
    <property type="evidence" value="ECO:0007669"/>
    <property type="project" value="Ensembl"/>
</dbReference>
<dbReference type="GO" id="GO:0000288">
    <property type="term" value="P:nuclear-transcribed mRNA catabolic process, deadenylation-dependent decay"/>
    <property type="evidence" value="ECO:0000318"/>
    <property type="project" value="GO_Central"/>
</dbReference>
<dbReference type="GO" id="GO:0000289">
    <property type="term" value="P:nuclear-transcribed mRNA poly(A) tail shortening"/>
    <property type="evidence" value="ECO:0007669"/>
    <property type="project" value="Ensembl"/>
</dbReference>
<dbReference type="GO" id="GO:0033962">
    <property type="term" value="P:P-body assembly"/>
    <property type="evidence" value="ECO:0007669"/>
    <property type="project" value="Ensembl"/>
</dbReference>
<dbReference type="GO" id="GO:0140991">
    <property type="term" value="P:piRNA-mediated gene silencing by mRNA destabilization"/>
    <property type="evidence" value="ECO:0007669"/>
    <property type="project" value="Ensembl"/>
</dbReference>
<dbReference type="GO" id="GO:0008284">
    <property type="term" value="P:positive regulation of cell population proliferation"/>
    <property type="evidence" value="ECO:0000250"/>
    <property type="project" value="UniProtKB"/>
</dbReference>
<dbReference type="GO" id="GO:1900153">
    <property type="term" value="P:positive regulation of nuclear-transcribed mRNA catabolic process, deadenylation-dependent decay"/>
    <property type="evidence" value="ECO:0000250"/>
    <property type="project" value="UniProtKB"/>
</dbReference>
<dbReference type="GO" id="GO:0060213">
    <property type="term" value="P:positive regulation of nuclear-transcribed mRNA poly(A) tail shortening"/>
    <property type="evidence" value="ECO:0000250"/>
    <property type="project" value="UniProtKB"/>
</dbReference>
<dbReference type="GO" id="GO:0045944">
    <property type="term" value="P:positive regulation of transcription by RNA polymerase II"/>
    <property type="evidence" value="ECO:0007669"/>
    <property type="project" value="Ensembl"/>
</dbReference>
<dbReference type="GO" id="GO:0045070">
    <property type="term" value="P:positive regulation of viral genome replication"/>
    <property type="evidence" value="ECO:0007669"/>
    <property type="project" value="Ensembl"/>
</dbReference>
<dbReference type="GO" id="GO:0006417">
    <property type="term" value="P:regulation of translation"/>
    <property type="evidence" value="ECO:0007669"/>
    <property type="project" value="UniProtKB-KW"/>
</dbReference>
<dbReference type="GO" id="GO:0031047">
    <property type="term" value="P:regulatory ncRNA-mediated gene silencing"/>
    <property type="evidence" value="ECO:0000250"/>
    <property type="project" value="UniProtKB"/>
</dbReference>
<dbReference type="FunFam" id="3.30.420.10:FF:000005">
    <property type="entry name" value="CCR4-NOT transcription complex subunit 7"/>
    <property type="match status" value="1"/>
</dbReference>
<dbReference type="Gene3D" id="3.30.420.10">
    <property type="entry name" value="Ribonuclease H-like superfamily/Ribonuclease H"/>
    <property type="match status" value="1"/>
</dbReference>
<dbReference type="InterPro" id="IPR039637">
    <property type="entry name" value="CNOT7/CNOT8/Pop2"/>
</dbReference>
<dbReference type="InterPro" id="IPR006941">
    <property type="entry name" value="RNase_CAF1"/>
</dbReference>
<dbReference type="InterPro" id="IPR012337">
    <property type="entry name" value="RNaseH-like_sf"/>
</dbReference>
<dbReference type="InterPro" id="IPR036397">
    <property type="entry name" value="RNaseH_sf"/>
</dbReference>
<dbReference type="PANTHER" id="PTHR10797">
    <property type="entry name" value="CCR4-NOT TRANSCRIPTION COMPLEX SUBUNIT"/>
    <property type="match status" value="1"/>
</dbReference>
<dbReference type="Pfam" id="PF04857">
    <property type="entry name" value="CAF1"/>
    <property type="match status" value="2"/>
</dbReference>
<dbReference type="SUPFAM" id="SSF53098">
    <property type="entry name" value="Ribonuclease H-like"/>
    <property type="match status" value="1"/>
</dbReference>